<protein>
    <recommendedName>
        <fullName evidence="1">Phosphatidylglycerol--prolipoprotein diacylglyceryl transferase</fullName>
        <ecNumber evidence="1">2.5.1.145</ecNumber>
    </recommendedName>
</protein>
<dbReference type="EC" id="2.5.1.145" evidence="1"/>
<dbReference type="EMBL" id="CP000381">
    <property type="protein sequence ID" value="ABX73170.1"/>
    <property type="molecule type" value="Genomic_DNA"/>
</dbReference>
<dbReference type="RefSeq" id="WP_002229436.1">
    <property type="nucleotide sequence ID" value="NC_010120.1"/>
</dbReference>
<dbReference type="SMR" id="A9LYZ3"/>
<dbReference type="KEGG" id="nmn:NMCC_0990"/>
<dbReference type="HOGENOM" id="CLU_013386_1_0_4"/>
<dbReference type="UniPathway" id="UPA00664"/>
<dbReference type="Proteomes" id="UP000001177">
    <property type="component" value="Chromosome"/>
</dbReference>
<dbReference type="GO" id="GO:0005886">
    <property type="term" value="C:plasma membrane"/>
    <property type="evidence" value="ECO:0007669"/>
    <property type="project" value="UniProtKB-SubCell"/>
</dbReference>
<dbReference type="GO" id="GO:0008961">
    <property type="term" value="F:phosphatidylglycerol-prolipoprotein diacylglyceryl transferase activity"/>
    <property type="evidence" value="ECO:0007669"/>
    <property type="project" value="UniProtKB-UniRule"/>
</dbReference>
<dbReference type="GO" id="GO:0042158">
    <property type="term" value="P:lipoprotein biosynthetic process"/>
    <property type="evidence" value="ECO:0007669"/>
    <property type="project" value="UniProtKB-UniRule"/>
</dbReference>
<dbReference type="HAMAP" id="MF_01147">
    <property type="entry name" value="Lgt"/>
    <property type="match status" value="1"/>
</dbReference>
<dbReference type="InterPro" id="IPR001640">
    <property type="entry name" value="Lgt"/>
</dbReference>
<dbReference type="NCBIfam" id="TIGR00544">
    <property type="entry name" value="lgt"/>
    <property type="match status" value="1"/>
</dbReference>
<dbReference type="PANTHER" id="PTHR30589:SF0">
    <property type="entry name" value="PHOSPHATIDYLGLYCEROL--PROLIPOPROTEIN DIACYLGLYCERYL TRANSFERASE"/>
    <property type="match status" value="1"/>
</dbReference>
<dbReference type="PANTHER" id="PTHR30589">
    <property type="entry name" value="PROLIPOPROTEIN DIACYLGLYCERYL TRANSFERASE"/>
    <property type="match status" value="1"/>
</dbReference>
<dbReference type="Pfam" id="PF01790">
    <property type="entry name" value="LGT"/>
    <property type="match status" value="1"/>
</dbReference>
<dbReference type="PROSITE" id="PS01311">
    <property type="entry name" value="LGT"/>
    <property type="match status" value="1"/>
</dbReference>
<keyword id="KW-0997">Cell inner membrane</keyword>
<keyword id="KW-1003">Cell membrane</keyword>
<keyword id="KW-0472">Membrane</keyword>
<keyword id="KW-0808">Transferase</keyword>
<keyword id="KW-0812">Transmembrane</keyword>
<keyword id="KW-1133">Transmembrane helix</keyword>
<feature type="chain" id="PRO_1000085079" description="Phosphatidylglycerol--prolipoprotein diacylglyceryl transferase">
    <location>
        <begin position="1"/>
        <end position="283"/>
    </location>
</feature>
<feature type="transmembrane region" description="Helical" evidence="1">
    <location>
        <begin position="17"/>
        <end position="37"/>
    </location>
</feature>
<feature type="transmembrane region" description="Helical" evidence="1">
    <location>
        <begin position="56"/>
        <end position="76"/>
    </location>
</feature>
<feature type="transmembrane region" description="Helical" evidence="1">
    <location>
        <begin position="92"/>
        <end position="112"/>
    </location>
</feature>
<feature type="transmembrane region" description="Helical" evidence="1">
    <location>
        <begin position="117"/>
        <end position="137"/>
    </location>
</feature>
<feature type="transmembrane region" description="Helical" evidence="1">
    <location>
        <begin position="194"/>
        <end position="214"/>
    </location>
</feature>
<feature type="transmembrane region" description="Helical" evidence="1">
    <location>
        <begin position="222"/>
        <end position="242"/>
    </location>
</feature>
<feature type="transmembrane region" description="Helical" evidence="1">
    <location>
        <begin position="255"/>
        <end position="275"/>
    </location>
</feature>
<feature type="binding site" evidence="1">
    <location>
        <position position="139"/>
    </location>
    <ligand>
        <name>a 1,2-diacyl-sn-glycero-3-phospho-(1'-sn-glycerol)</name>
        <dbReference type="ChEBI" id="CHEBI:64716"/>
    </ligand>
</feature>
<gene>
    <name evidence="1" type="primary">lgt</name>
    <name type="ordered locus">NMCC_0990</name>
</gene>
<evidence type="ECO:0000255" key="1">
    <source>
        <dbReference type="HAMAP-Rule" id="MF_01147"/>
    </source>
</evidence>
<proteinExistence type="inferred from homology"/>
<comment type="function">
    <text evidence="1">Catalyzes the transfer of the diacylglyceryl group from phosphatidylglycerol to the sulfhydryl group of the N-terminal cysteine of a prolipoprotein, the first step in the formation of mature lipoproteins.</text>
</comment>
<comment type="catalytic activity">
    <reaction evidence="1">
        <text>L-cysteinyl-[prolipoprotein] + a 1,2-diacyl-sn-glycero-3-phospho-(1'-sn-glycerol) = an S-1,2-diacyl-sn-glyceryl-L-cysteinyl-[prolipoprotein] + sn-glycerol 1-phosphate + H(+)</text>
        <dbReference type="Rhea" id="RHEA:56712"/>
        <dbReference type="Rhea" id="RHEA-COMP:14679"/>
        <dbReference type="Rhea" id="RHEA-COMP:14680"/>
        <dbReference type="ChEBI" id="CHEBI:15378"/>
        <dbReference type="ChEBI" id="CHEBI:29950"/>
        <dbReference type="ChEBI" id="CHEBI:57685"/>
        <dbReference type="ChEBI" id="CHEBI:64716"/>
        <dbReference type="ChEBI" id="CHEBI:140658"/>
        <dbReference type="EC" id="2.5.1.145"/>
    </reaction>
</comment>
<comment type="pathway">
    <text evidence="1">Protein modification; lipoprotein biosynthesis (diacylglyceryl transfer).</text>
</comment>
<comment type="subcellular location">
    <subcellularLocation>
        <location evidence="1">Cell inner membrane</location>
        <topology evidence="1">Multi-pass membrane protein</topology>
    </subcellularLocation>
</comment>
<comment type="similarity">
    <text evidence="1">Belongs to the Lgt family.</text>
</comment>
<accession>A9LYZ3</accession>
<organism>
    <name type="scientific">Neisseria meningitidis serogroup C (strain 053442)</name>
    <dbReference type="NCBI Taxonomy" id="374833"/>
    <lineage>
        <taxon>Bacteria</taxon>
        <taxon>Pseudomonadati</taxon>
        <taxon>Pseudomonadota</taxon>
        <taxon>Betaproteobacteria</taxon>
        <taxon>Neisseriales</taxon>
        <taxon>Neisseriaceae</taxon>
        <taxon>Neisseria</taxon>
    </lineage>
</organism>
<reference key="1">
    <citation type="journal article" date="2008" name="Genomics">
        <title>Characterization of ST-4821 complex, a unique Neisseria meningitidis clone.</title>
        <authorList>
            <person name="Peng J."/>
            <person name="Yang L."/>
            <person name="Yang F."/>
            <person name="Yang J."/>
            <person name="Yan Y."/>
            <person name="Nie H."/>
            <person name="Zhang X."/>
            <person name="Xiong Z."/>
            <person name="Jiang Y."/>
            <person name="Cheng F."/>
            <person name="Xu X."/>
            <person name="Chen S."/>
            <person name="Sun L."/>
            <person name="Li W."/>
            <person name="Shen Y."/>
            <person name="Shao Z."/>
            <person name="Liang X."/>
            <person name="Xu J."/>
            <person name="Jin Q."/>
        </authorList>
    </citation>
    <scope>NUCLEOTIDE SEQUENCE [LARGE SCALE GENOMIC DNA]</scope>
    <source>
        <strain>053442</strain>
    </source>
</reference>
<name>LGT_NEIM0</name>
<sequence length="283" mass="31906">MIIHPQFDPVLISIGPLAVRWYALSYILGFILFTFLGRRRIAQGLSVFTKESLDDFLTWGILGVIFGGRLGYVLFYKFSDYLAHPLDIFKVWEGGMSFHGGFLGVVIAIWLFGRKHGIGFLKLMDTVAPLVPLGLASGRIGNFINGELWGRVTDINAFWAMGFPQARYEDLEAAAHNPLWAEWLQQYGMLPRHPSQLYQFALEGICLFAVVWLFSKKQRPTGQVASLFLGGYGIFRFIAEFARQPDDYLGLLTLGLSMGQWLSVPMIVLGIVGFVRFGMKKQH</sequence>